<sequence length="662" mass="75185">MNFPWDQLLVKGNWMITMAQIGAPFLVIGLIAVITYFKLWKYLYKEWFTSVDHKKIGIMYLICAVLMFVRGGIDALLIRAQLTVPDNKFLESNHYNEIFSTHGVIMIIFMAMPFIFGLWNIVVPLQIGARDVAFPVLNNVSFWLFFAGMILFNLSFIIGGSPAAGWTNYAPLAGEFSPGPGVNYYLIAIQISGLGTLATGINFFVTILRCKTPTMKFMQMPMFTVTTFITTLIVILAFPPLTVALALMTTDRIFDTAFFTVAHGGMPMLWANFFWVWGHPEVYIVILPAFGIYSEIIPTFARKRLFGHQSMVWATAGIAFLSFLVWVHHFFTMGNGALINSFFSISTMLIGIPTGVKLFNWLLTLYKGRITFESPMLFSLAFIPNFLLGGVTGVMLAMASADYQYHNTYFLVAHFHYTLVTGVVFACLAGLIFWYPKMMGYKLNETLNKWCFWFFMIGFNVCFLPQFILGLDGMPRRLYTYMPSDGWFLLNLISTIGALLMAIGFLFLVVSIVYSHFKSPREATGDNWDGLGRTLEWTTASAIPPKYNFAITPDWNGYDTFVDMKEHGRHYLDNHNYKDIHMPNNTPVGFWIGIFMTIGGFFLIFETVIPALICLFGIFGTMIYRSFQIDHGYHIPAAEVAETEARLREARIKEREAVSHES</sequence>
<evidence type="ECO:0000250" key="1"/>
<evidence type="ECO:0000255" key="2"/>
<evidence type="ECO:0000305" key="3"/>
<keyword id="KW-1003">Cell membrane</keyword>
<keyword id="KW-0186">Copper</keyword>
<keyword id="KW-0249">Electron transport</keyword>
<keyword id="KW-0349">Heme</keyword>
<keyword id="KW-0375">Hydrogen ion transport</keyword>
<keyword id="KW-0406">Ion transport</keyword>
<keyword id="KW-0408">Iron</keyword>
<keyword id="KW-0472">Membrane</keyword>
<keyword id="KW-0479">Metal-binding</keyword>
<keyword id="KW-0560">Oxidoreductase</keyword>
<keyword id="KW-0679">Respiratory chain</keyword>
<keyword id="KW-0812">Transmembrane</keyword>
<keyword id="KW-1133">Transmembrane helix</keyword>
<keyword id="KW-0813">Transport</keyword>
<reference key="1">
    <citation type="journal article" date="2004" name="Proc. Natl. Acad. Sci. U.S.A.">
        <title>Complete genomes of two clinical Staphylococcus aureus strains: evidence for the rapid evolution of virulence and drug resistance.</title>
        <authorList>
            <person name="Holden M.T.G."/>
            <person name="Feil E.J."/>
            <person name="Lindsay J.A."/>
            <person name="Peacock S.J."/>
            <person name="Day N.P.J."/>
            <person name="Enright M.C."/>
            <person name="Foster T.J."/>
            <person name="Moore C.E."/>
            <person name="Hurst L."/>
            <person name="Atkin R."/>
            <person name="Barron A."/>
            <person name="Bason N."/>
            <person name="Bentley S.D."/>
            <person name="Chillingworth C."/>
            <person name="Chillingworth T."/>
            <person name="Churcher C."/>
            <person name="Clark L."/>
            <person name="Corton C."/>
            <person name="Cronin A."/>
            <person name="Doggett J."/>
            <person name="Dowd L."/>
            <person name="Feltwell T."/>
            <person name="Hance Z."/>
            <person name="Harris B."/>
            <person name="Hauser H."/>
            <person name="Holroyd S."/>
            <person name="Jagels K."/>
            <person name="James K.D."/>
            <person name="Lennard N."/>
            <person name="Line A."/>
            <person name="Mayes R."/>
            <person name="Moule S."/>
            <person name="Mungall K."/>
            <person name="Ormond D."/>
            <person name="Quail M.A."/>
            <person name="Rabbinowitsch E."/>
            <person name="Rutherford K.M."/>
            <person name="Sanders M."/>
            <person name="Sharp S."/>
            <person name="Simmonds M."/>
            <person name="Stevens K."/>
            <person name="Whitehead S."/>
            <person name="Barrell B.G."/>
            <person name="Spratt B.G."/>
            <person name="Parkhill J."/>
        </authorList>
    </citation>
    <scope>NUCLEOTIDE SEQUENCE [LARGE SCALE GENOMIC DNA]</scope>
    <source>
        <strain>MRSA252</strain>
    </source>
</reference>
<gene>
    <name type="primary">qoxB</name>
    <name type="ordered locus">SAR1033</name>
</gene>
<proteinExistence type="inferred from homology"/>
<dbReference type="EC" id="1.10.3.-"/>
<dbReference type="EMBL" id="BX571856">
    <property type="protein sequence ID" value="CAG40037.1"/>
    <property type="molecule type" value="Genomic_DNA"/>
</dbReference>
<dbReference type="RefSeq" id="WP_001010763.1">
    <property type="nucleotide sequence ID" value="NC_002952.2"/>
</dbReference>
<dbReference type="SMR" id="Q6GI24"/>
<dbReference type="KEGG" id="sar:SAR1033"/>
<dbReference type="HOGENOM" id="CLU_011899_7_1_9"/>
<dbReference type="UniPathway" id="UPA00705"/>
<dbReference type="Proteomes" id="UP000000596">
    <property type="component" value="Chromosome"/>
</dbReference>
<dbReference type="GO" id="GO:0005886">
    <property type="term" value="C:plasma membrane"/>
    <property type="evidence" value="ECO:0007669"/>
    <property type="project" value="UniProtKB-SubCell"/>
</dbReference>
<dbReference type="GO" id="GO:0005507">
    <property type="term" value="F:copper ion binding"/>
    <property type="evidence" value="ECO:0007669"/>
    <property type="project" value="InterPro"/>
</dbReference>
<dbReference type="GO" id="GO:0004129">
    <property type="term" value="F:cytochrome-c oxidase activity"/>
    <property type="evidence" value="ECO:0007669"/>
    <property type="project" value="InterPro"/>
</dbReference>
<dbReference type="GO" id="GO:0020037">
    <property type="term" value="F:heme binding"/>
    <property type="evidence" value="ECO:0007669"/>
    <property type="project" value="InterPro"/>
</dbReference>
<dbReference type="GO" id="GO:0016682">
    <property type="term" value="F:oxidoreductase activity, acting on diphenols and related substances as donors, oxygen as acceptor"/>
    <property type="evidence" value="ECO:0007669"/>
    <property type="project" value="InterPro"/>
</dbReference>
<dbReference type="GO" id="GO:0015990">
    <property type="term" value="P:electron transport coupled proton transport"/>
    <property type="evidence" value="ECO:0007669"/>
    <property type="project" value="TreeGrafter"/>
</dbReference>
<dbReference type="GO" id="GO:0006119">
    <property type="term" value="P:oxidative phosphorylation"/>
    <property type="evidence" value="ECO:0007669"/>
    <property type="project" value="UniProtKB-UniPathway"/>
</dbReference>
<dbReference type="GO" id="GO:0022904">
    <property type="term" value="P:respiratory electron transport chain"/>
    <property type="evidence" value="ECO:0007669"/>
    <property type="project" value="TreeGrafter"/>
</dbReference>
<dbReference type="CDD" id="cd01662">
    <property type="entry name" value="Ubiquinol_Oxidase_I"/>
    <property type="match status" value="1"/>
</dbReference>
<dbReference type="FunFam" id="1.20.210.10:FF:000002">
    <property type="entry name" value="Cytochrome o ubiquinol oxidase, subunit I"/>
    <property type="match status" value="1"/>
</dbReference>
<dbReference type="Gene3D" id="1.20.210.10">
    <property type="entry name" value="Cytochrome c oxidase-like, subunit I domain"/>
    <property type="match status" value="1"/>
</dbReference>
<dbReference type="InterPro" id="IPR023616">
    <property type="entry name" value="Cyt_c_oxase-like_su1_dom"/>
</dbReference>
<dbReference type="InterPro" id="IPR036927">
    <property type="entry name" value="Cyt_c_oxase-like_su1_sf"/>
</dbReference>
<dbReference type="InterPro" id="IPR000883">
    <property type="entry name" value="Cyt_C_Oxase_1"/>
</dbReference>
<dbReference type="InterPro" id="IPR023615">
    <property type="entry name" value="Cyt_c_Oxase_su1_BS"/>
</dbReference>
<dbReference type="InterPro" id="IPR014233">
    <property type="entry name" value="QoxB"/>
</dbReference>
<dbReference type="NCBIfam" id="TIGR02882">
    <property type="entry name" value="QoxB"/>
    <property type="match status" value="1"/>
</dbReference>
<dbReference type="PANTHER" id="PTHR10422:SF35">
    <property type="entry name" value="CYTOCHROME BO(3) UBIQUINOL OXIDASE SUBUNIT 1"/>
    <property type="match status" value="1"/>
</dbReference>
<dbReference type="PANTHER" id="PTHR10422">
    <property type="entry name" value="CYTOCHROME C OXIDASE SUBUNIT 1"/>
    <property type="match status" value="1"/>
</dbReference>
<dbReference type="Pfam" id="PF00115">
    <property type="entry name" value="COX1"/>
    <property type="match status" value="1"/>
</dbReference>
<dbReference type="PRINTS" id="PR01165">
    <property type="entry name" value="CYCOXIDASEI"/>
</dbReference>
<dbReference type="SUPFAM" id="SSF81442">
    <property type="entry name" value="Cytochrome c oxidase subunit I-like"/>
    <property type="match status" value="1"/>
</dbReference>
<dbReference type="PROSITE" id="PS50855">
    <property type="entry name" value="COX1"/>
    <property type="match status" value="1"/>
</dbReference>
<dbReference type="PROSITE" id="PS00077">
    <property type="entry name" value="COX1_CUB"/>
    <property type="match status" value="1"/>
</dbReference>
<organism>
    <name type="scientific">Staphylococcus aureus (strain MRSA252)</name>
    <dbReference type="NCBI Taxonomy" id="282458"/>
    <lineage>
        <taxon>Bacteria</taxon>
        <taxon>Bacillati</taxon>
        <taxon>Bacillota</taxon>
        <taxon>Bacilli</taxon>
        <taxon>Bacillales</taxon>
        <taxon>Staphylococcaceae</taxon>
        <taxon>Staphylococcus</taxon>
    </lineage>
</organism>
<feature type="chain" id="PRO_0000276743" description="Probable quinol oxidase subunit 1">
    <location>
        <begin position="1"/>
        <end position="662"/>
    </location>
</feature>
<feature type="transmembrane region" description="Helical" evidence="2">
    <location>
        <begin position="14"/>
        <end position="34"/>
    </location>
</feature>
<feature type="transmembrane region" description="Helical" evidence="2">
    <location>
        <begin position="58"/>
        <end position="78"/>
    </location>
</feature>
<feature type="transmembrane region" description="Helical" evidence="2">
    <location>
        <begin position="103"/>
        <end position="123"/>
    </location>
</feature>
<feature type="transmembrane region" description="Helical" evidence="2">
    <location>
        <begin position="140"/>
        <end position="160"/>
    </location>
</feature>
<feature type="transmembrane region" description="Helical" evidence="2">
    <location>
        <begin position="187"/>
        <end position="207"/>
    </location>
</feature>
<feature type="transmembrane region" description="Helical" evidence="2">
    <location>
        <begin position="228"/>
        <end position="248"/>
    </location>
</feature>
<feature type="transmembrane region" description="Helical" evidence="2">
    <location>
        <begin position="273"/>
        <end position="293"/>
    </location>
</feature>
<feature type="transmembrane region" description="Helical" evidence="2">
    <location>
        <begin position="311"/>
        <end position="331"/>
    </location>
</feature>
<feature type="transmembrane region" description="Helical" evidence="2">
    <location>
        <begin position="336"/>
        <end position="356"/>
    </location>
</feature>
<feature type="transmembrane region" description="Helical" evidence="2">
    <location>
        <begin position="376"/>
        <end position="396"/>
    </location>
</feature>
<feature type="transmembrane region" description="Helical" evidence="2">
    <location>
        <begin position="415"/>
        <end position="435"/>
    </location>
</feature>
<feature type="transmembrane region" description="Helical" evidence="2">
    <location>
        <begin position="451"/>
        <end position="471"/>
    </location>
</feature>
<feature type="transmembrane region" description="Helical" evidence="2">
    <location>
        <begin position="493"/>
        <end position="513"/>
    </location>
</feature>
<feature type="transmembrane region" description="Helical" evidence="2">
    <location>
        <begin position="587"/>
        <end position="604"/>
    </location>
</feature>
<feature type="transmembrane region" description="Helical" evidence="2">
    <location>
        <begin position="608"/>
        <end position="627"/>
    </location>
</feature>
<feature type="binding site" description="axial binding residue" evidence="1">
    <location>
        <position position="102"/>
    </location>
    <ligand>
        <name>Fe(II)-heme a</name>
        <dbReference type="ChEBI" id="CHEBI:61715"/>
    </ligand>
    <ligandPart>
        <name>Fe</name>
        <dbReference type="ChEBI" id="CHEBI:18248"/>
    </ligandPart>
</feature>
<feature type="binding site" evidence="1">
    <location>
        <position position="279"/>
    </location>
    <ligand>
        <name>Cu cation</name>
        <dbReference type="ChEBI" id="CHEBI:23378"/>
        <label>B</label>
    </ligand>
</feature>
<feature type="binding site" evidence="1">
    <location>
        <position position="283"/>
    </location>
    <ligand>
        <name>Cu cation</name>
        <dbReference type="ChEBI" id="CHEBI:23378"/>
        <label>B</label>
    </ligand>
</feature>
<feature type="binding site" evidence="1">
    <location>
        <position position="328"/>
    </location>
    <ligand>
        <name>Cu cation</name>
        <dbReference type="ChEBI" id="CHEBI:23378"/>
        <label>B</label>
    </ligand>
</feature>
<feature type="binding site" evidence="1">
    <location>
        <position position="329"/>
    </location>
    <ligand>
        <name>Cu cation</name>
        <dbReference type="ChEBI" id="CHEBI:23378"/>
        <label>B</label>
    </ligand>
</feature>
<feature type="binding site" description="axial binding residue" evidence="1">
    <location>
        <position position="414"/>
    </location>
    <ligand>
        <name>heme a3</name>
        <dbReference type="ChEBI" id="CHEBI:83282"/>
    </ligand>
    <ligandPart>
        <name>Fe</name>
        <dbReference type="ChEBI" id="CHEBI:18248"/>
    </ligandPart>
</feature>
<feature type="binding site" description="axial binding residue" evidence="1">
    <location>
        <position position="416"/>
    </location>
    <ligand>
        <name>Fe(II)-heme a</name>
        <dbReference type="ChEBI" id="CHEBI:61715"/>
    </ligand>
    <ligandPart>
        <name>Fe</name>
        <dbReference type="ChEBI" id="CHEBI:18248"/>
    </ligandPart>
</feature>
<feature type="cross-link" description="1'-histidyl-3'-tyrosine (His-Tyr)" evidence="1">
    <location>
        <begin position="279"/>
        <end position="283"/>
    </location>
</feature>
<comment type="function">
    <text evidence="1">Catalyzes quinol oxidation with the concomitant reduction of oxygen to water.</text>
</comment>
<comment type="catalytic activity">
    <reaction>
        <text>2 a quinol + O2 = 2 a quinone + 2 H2O</text>
        <dbReference type="Rhea" id="RHEA:55376"/>
        <dbReference type="ChEBI" id="CHEBI:15377"/>
        <dbReference type="ChEBI" id="CHEBI:15379"/>
        <dbReference type="ChEBI" id="CHEBI:24646"/>
        <dbReference type="ChEBI" id="CHEBI:132124"/>
    </reaction>
</comment>
<comment type="cofactor">
    <cofactor evidence="1">
        <name>Cu cation</name>
        <dbReference type="ChEBI" id="CHEBI:23378"/>
    </cofactor>
    <text evidence="1">Binds a copper B center.</text>
</comment>
<comment type="cofactor">
    <cofactor evidence="1">
        <name>ferriheme a</name>
        <dbReference type="ChEBI" id="CHEBI:60532"/>
    </cofactor>
</comment>
<comment type="cofactor">
    <text evidence="1">Heme A3.</text>
</comment>
<comment type="pathway">
    <text>Energy metabolism; oxidative phosphorylation.</text>
</comment>
<comment type="subcellular location">
    <subcellularLocation>
        <location evidence="1">Cell membrane</location>
        <topology evidence="1">Multi-pass membrane protein</topology>
    </subcellularLocation>
</comment>
<comment type="similarity">
    <text evidence="3">Belongs to the heme-copper respiratory oxidase family.</text>
</comment>
<name>QOX1_STAAR</name>
<protein>
    <recommendedName>
        <fullName>Probable quinol oxidase subunit 1</fullName>
        <ecNumber>1.10.3.-</ecNumber>
    </recommendedName>
    <alternativeName>
        <fullName>Quinol oxidase polypeptide I</fullName>
    </alternativeName>
</protein>
<accession>Q6GI24</accession>